<keyword id="KW-0963">Cytoplasm</keyword>
<keyword id="KW-1185">Reference proteome</keyword>
<keyword id="KW-0690">Ribosome biogenesis</keyword>
<proteinExistence type="inferred from homology"/>
<sequence>MAHGVDRTRRIGEQMRRDLAQALVDIVHHPHASLLSFTAVHLTRDLSFAKVYVTHVLDNEEERSELVAELNAKAGQFRHYLAKNLSIRKVPELQFYYDQSVEYGARMEQLLTHLVKDSEHKD</sequence>
<gene>
    <name evidence="1" type="primary">rbfA</name>
    <name type="ordered locus">DNO_0028</name>
</gene>
<reference key="1">
    <citation type="journal article" date="2007" name="Nat. Biotechnol.">
        <title>Genome sequence and identification of candidate vaccine antigens from the animal pathogen Dichelobacter nodosus.</title>
        <authorList>
            <person name="Myers G.S.A."/>
            <person name="Parker D."/>
            <person name="Al-Hasani K."/>
            <person name="Kennan R.M."/>
            <person name="Seemann T."/>
            <person name="Ren Q."/>
            <person name="Badger J.H."/>
            <person name="Selengut J.D."/>
            <person name="Deboy R.T."/>
            <person name="Tettelin H."/>
            <person name="Boyce J.D."/>
            <person name="McCarl V.P."/>
            <person name="Han X."/>
            <person name="Nelson W.C."/>
            <person name="Madupu R."/>
            <person name="Mohamoud Y."/>
            <person name="Holley T."/>
            <person name="Fedorova N."/>
            <person name="Khouri H."/>
            <person name="Bottomley S.P."/>
            <person name="Whittington R.J."/>
            <person name="Adler B."/>
            <person name="Songer J.G."/>
            <person name="Rood J.I."/>
            <person name="Paulsen I.T."/>
        </authorList>
    </citation>
    <scope>NUCLEOTIDE SEQUENCE [LARGE SCALE GENOMIC DNA]</scope>
    <source>
        <strain>VCS1703A</strain>
    </source>
</reference>
<protein>
    <recommendedName>
        <fullName evidence="1">Ribosome-binding factor A</fullName>
    </recommendedName>
</protein>
<feature type="chain" id="PRO_1000000103" description="Ribosome-binding factor A">
    <location>
        <begin position="1"/>
        <end position="122"/>
    </location>
</feature>
<comment type="function">
    <text evidence="1">One of several proteins that assist in the late maturation steps of the functional core of the 30S ribosomal subunit. Associates with free 30S ribosomal subunits (but not with 30S subunits that are part of 70S ribosomes or polysomes). Required for efficient processing of 16S rRNA. May interact with the 5'-terminal helix region of 16S rRNA.</text>
</comment>
<comment type="subunit">
    <text evidence="1">Monomer. Binds 30S ribosomal subunits, but not 50S ribosomal subunits or 70S ribosomes.</text>
</comment>
<comment type="subcellular location">
    <subcellularLocation>
        <location evidence="1">Cytoplasm</location>
    </subcellularLocation>
</comment>
<comment type="similarity">
    <text evidence="1">Belongs to the RbfA family.</text>
</comment>
<dbReference type="EMBL" id="CP000513">
    <property type="protein sequence ID" value="ABQ13435.1"/>
    <property type="molecule type" value="Genomic_DNA"/>
</dbReference>
<dbReference type="RefSeq" id="WP_011927787.1">
    <property type="nucleotide sequence ID" value="NC_009446.1"/>
</dbReference>
<dbReference type="SMR" id="A5EWY8"/>
<dbReference type="STRING" id="246195.DNO_0028"/>
<dbReference type="KEGG" id="dno:DNO_0028"/>
<dbReference type="eggNOG" id="COG0858">
    <property type="taxonomic scope" value="Bacteria"/>
</dbReference>
<dbReference type="HOGENOM" id="CLU_089475_3_2_6"/>
<dbReference type="OrthoDB" id="307788at2"/>
<dbReference type="Proteomes" id="UP000000248">
    <property type="component" value="Chromosome"/>
</dbReference>
<dbReference type="GO" id="GO:0005829">
    <property type="term" value="C:cytosol"/>
    <property type="evidence" value="ECO:0007669"/>
    <property type="project" value="TreeGrafter"/>
</dbReference>
<dbReference type="GO" id="GO:0043024">
    <property type="term" value="F:ribosomal small subunit binding"/>
    <property type="evidence" value="ECO:0007669"/>
    <property type="project" value="TreeGrafter"/>
</dbReference>
<dbReference type="GO" id="GO:0030490">
    <property type="term" value="P:maturation of SSU-rRNA"/>
    <property type="evidence" value="ECO:0007669"/>
    <property type="project" value="UniProtKB-UniRule"/>
</dbReference>
<dbReference type="Gene3D" id="3.30.300.20">
    <property type="match status" value="1"/>
</dbReference>
<dbReference type="HAMAP" id="MF_00003">
    <property type="entry name" value="RbfA"/>
    <property type="match status" value="1"/>
</dbReference>
<dbReference type="InterPro" id="IPR015946">
    <property type="entry name" value="KH_dom-like_a/b"/>
</dbReference>
<dbReference type="InterPro" id="IPR000238">
    <property type="entry name" value="RbfA"/>
</dbReference>
<dbReference type="InterPro" id="IPR023799">
    <property type="entry name" value="RbfA_dom_sf"/>
</dbReference>
<dbReference type="InterPro" id="IPR020053">
    <property type="entry name" value="Ribosome-bd_factorA_CS"/>
</dbReference>
<dbReference type="NCBIfam" id="TIGR00082">
    <property type="entry name" value="rbfA"/>
    <property type="match status" value="1"/>
</dbReference>
<dbReference type="PANTHER" id="PTHR33515">
    <property type="entry name" value="RIBOSOME-BINDING FACTOR A, CHLOROPLASTIC-RELATED"/>
    <property type="match status" value="1"/>
</dbReference>
<dbReference type="PANTHER" id="PTHR33515:SF1">
    <property type="entry name" value="RIBOSOME-BINDING FACTOR A, CHLOROPLASTIC-RELATED"/>
    <property type="match status" value="1"/>
</dbReference>
<dbReference type="Pfam" id="PF02033">
    <property type="entry name" value="RBFA"/>
    <property type="match status" value="1"/>
</dbReference>
<dbReference type="SUPFAM" id="SSF89919">
    <property type="entry name" value="Ribosome-binding factor A, RbfA"/>
    <property type="match status" value="1"/>
</dbReference>
<dbReference type="PROSITE" id="PS01319">
    <property type="entry name" value="RBFA"/>
    <property type="match status" value="1"/>
</dbReference>
<evidence type="ECO:0000255" key="1">
    <source>
        <dbReference type="HAMAP-Rule" id="MF_00003"/>
    </source>
</evidence>
<organism>
    <name type="scientific">Dichelobacter nodosus (strain VCS1703A)</name>
    <dbReference type="NCBI Taxonomy" id="246195"/>
    <lineage>
        <taxon>Bacteria</taxon>
        <taxon>Pseudomonadati</taxon>
        <taxon>Pseudomonadota</taxon>
        <taxon>Gammaproteobacteria</taxon>
        <taxon>Cardiobacteriales</taxon>
        <taxon>Cardiobacteriaceae</taxon>
        <taxon>Dichelobacter</taxon>
    </lineage>
</organism>
<name>RBFA_DICNV</name>
<accession>A5EWY8</accession>